<proteinExistence type="inferred from homology"/>
<protein>
    <recommendedName>
        <fullName>Small membrane A-kinase anchor protein</fullName>
        <shortName>Small membrane AKAP</shortName>
        <shortName>smAKAP</shortName>
    </recommendedName>
</protein>
<comment type="function">
    <text evidence="1">Binds to type I regulatory subunits of protein kinase A and may anchor/target them to the plasma membrane.</text>
</comment>
<comment type="subcellular location">
    <subcellularLocation>
        <location evidence="1">Cell membrane</location>
    </subcellularLocation>
</comment>
<comment type="PTM">
    <text evidence="1">May be palmitoylated at Cys-3.</text>
</comment>
<comment type="similarity">
    <text evidence="3">Belongs to the small membrane AKAP family.</text>
</comment>
<reference key="1">
    <citation type="journal article" date="2004" name="Nature">
        <title>Genome duplication in the teleost fish Tetraodon nigroviridis reveals the early vertebrate proto-karyotype.</title>
        <authorList>
            <person name="Jaillon O."/>
            <person name="Aury J.-M."/>
            <person name="Brunet F."/>
            <person name="Petit J.-L."/>
            <person name="Stange-Thomann N."/>
            <person name="Mauceli E."/>
            <person name="Bouneau L."/>
            <person name="Fischer C."/>
            <person name="Ozouf-Costaz C."/>
            <person name="Bernot A."/>
            <person name="Nicaud S."/>
            <person name="Jaffe D."/>
            <person name="Fisher S."/>
            <person name="Lutfalla G."/>
            <person name="Dossat C."/>
            <person name="Segurens B."/>
            <person name="Dasilva C."/>
            <person name="Salanoubat M."/>
            <person name="Levy M."/>
            <person name="Boudet N."/>
            <person name="Castellano S."/>
            <person name="Anthouard V."/>
            <person name="Jubin C."/>
            <person name="Castelli V."/>
            <person name="Katinka M."/>
            <person name="Vacherie B."/>
            <person name="Biemont C."/>
            <person name="Skalli Z."/>
            <person name="Cattolico L."/>
            <person name="Poulain J."/>
            <person name="De Berardinis V."/>
            <person name="Cruaud C."/>
            <person name="Duprat S."/>
            <person name="Brottier P."/>
            <person name="Coutanceau J.-P."/>
            <person name="Gouzy J."/>
            <person name="Parra G."/>
            <person name="Lardier G."/>
            <person name="Chapple C."/>
            <person name="McKernan K.J."/>
            <person name="McEwan P."/>
            <person name="Bosak S."/>
            <person name="Kellis M."/>
            <person name="Volff J.-N."/>
            <person name="Guigo R."/>
            <person name="Zody M.C."/>
            <person name="Mesirov J."/>
            <person name="Lindblad-Toh K."/>
            <person name="Birren B."/>
            <person name="Nusbaum C."/>
            <person name="Kahn D."/>
            <person name="Robinson-Rechavi M."/>
            <person name="Laudet V."/>
            <person name="Schachter V."/>
            <person name="Quetier F."/>
            <person name="Saurin W."/>
            <person name="Scarpelli C."/>
            <person name="Wincker P."/>
            <person name="Lander E.S."/>
            <person name="Weissenbach J."/>
            <person name="Roest Crollius H."/>
        </authorList>
    </citation>
    <scope>NUCLEOTIDE SEQUENCE [LARGE SCALE GENOMIC DNA]</scope>
</reference>
<keyword id="KW-1003">Cell membrane</keyword>
<keyword id="KW-0449">Lipoprotein</keyword>
<keyword id="KW-0472">Membrane</keyword>
<keyword id="KW-0519">Myristate</keyword>
<keyword id="KW-0564">Palmitate</keyword>
<keyword id="KW-1185">Reference proteome</keyword>
<gene>
    <name type="ORF">GSTENG00029219001</name>
</gene>
<name>SMAKA_TETNG</name>
<evidence type="ECO:0000250" key="1"/>
<evidence type="ECO:0000255" key="2"/>
<evidence type="ECO:0000305" key="3"/>
<accession>Q4RTJ5</accession>
<sequence>MGCVKSKKSAAEAAVGGAPGEKARLVGPEEARAPGAPQAGPVLLDYAQRLSEEIVVRAVQQWAELDRRYGDIPYIECDAP</sequence>
<organism>
    <name type="scientific">Tetraodon nigroviridis</name>
    <name type="common">Spotted green pufferfish</name>
    <name type="synonym">Chelonodon nigroviridis</name>
    <dbReference type="NCBI Taxonomy" id="99883"/>
    <lineage>
        <taxon>Eukaryota</taxon>
        <taxon>Metazoa</taxon>
        <taxon>Chordata</taxon>
        <taxon>Craniata</taxon>
        <taxon>Vertebrata</taxon>
        <taxon>Euteleostomi</taxon>
        <taxon>Actinopterygii</taxon>
        <taxon>Neopterygii</taxon>
        <taxon>Teleostei</taxon>
        <taxon>Neoteleostei</taxon>
        <taxon>Acanthomorphata</taxon>
        <taxon>Eupercaria</taxon>
        <taxon>Tetraodontiformes</taxon>
        <taxon>Tetradontoidea</taxon>
        <taxon>Tetraodontidae</taxon>
        <taxon>Tetraodon</taxon>
    </lineage>
</organism>
<feature type="initiator methionine" description="Removed" evidence="2">
    <location>
        <position position="1"/>
    </location>
</feature>
<feature type="chain" id="PRO_0000365560" description="Small membrane A-kinase anchor protein">
    <location>
        <begin position="2"/>
        <end position="80"/>
    </location>
</feature>
<feature type="lipid moiety-binding region" description="N-myristoyl glycine" evidence="2">
    <location>
        <position position="2"/>
    </location>
</feature>
<dbReference type="EMBL" id="CAAE01014997">
    <property type="protein sequence ID" value="CAG08287.1"/>
    <property type="molecule type" value="Genomic_DNA"/>
</dbReference>
<dbReference type="FunCoup" id="Q4RTJ5">
    <property type="interactions" value="616"/>
</dbReference>
<dbReference type="KEGG" id="tng:GSTEN00029219G001"/>
<dbReference type="InParanoid" id="Q4RTJ5"/>
<dbReference type="OrthoDB" id="8907307at2759"/>
<dbReference type="Proteomes" id="UP000007303">
    <property type="component" value="Unassembled WGS sequence"/>
</dbReference>
<dbReference type="GO" id="GO:0005886">
    <property type="term" value="C:plasma membrane"/>
    <property type="evidence" value="ECO:0007669"/>
    <property type="project" value="UniProtKB-SubCell"/>
</dbReference>
<dbReference type="GO" id="GO:0034237">
    <property type="term" value="F:protein kinase A regulatory subunit binding"/>
    <property type="evidence" value="ECO:0007669"/>
    <property type="project" value="InterPro"/>
</dbReference>
<dbReference type="InterPro" id="IPR027969">
    <property type="entry name" value="Small_membr_AKAP"/>
</dbReference>
<dbReference type="PANTHER" id="PTHR36471">
    <property type="entry name" value="SMALL MEMBRANE A-KINASE ANCHOR PROTEIN"/>
    <property type="match status" value="1"/>
</dbReference>
<dbReference type="PANTHER" id="PTHR36471:SF1">
    <property type="entry name" value="SMALL MEMBRANE A-KINASE ANCHOR PROTEIN"/>
    <property type="match status" value="1"/>
</dbReference>
<dbReference type="Pfam" id="PF15127">
    <property type="entry name" value="SmAKAP"/>
    <property type="match status" value="1"/>
</dbReference>